<comment type="function">
    <text evidence="1">Probably involved in peptidoglycan hydrolysis.</text>
</comment>
<comment type="subcellular location">
    <subcellularLocation>
        <location evidence="5">Secreted</location>
    </subcellularLocation>
</comment>
<comment type="sequence caution" evidence="5">
    <conflict type="erroneous initiation">
        <sequence resource="EMBL-CDS" id="BAB42342"/>
    </conflict>
</comment>
<proteinExistence type="inferred from homology"/>
<keyword id="KW-0961">Cell wall biogenesis/degradation</keyword>
<keyword id="KW-0378">Hydrolase</keyword>
<keyword id="KW-0964">Secreted</keyword>
<keyword id="KW-0732">Signal</keyword>
<protein>
    <recommendedName>
        <fullName>Probable cell wall hydrolase LytN</fullName>
        <ecNumber>3.-.-.-</ecNumber>
    </recommendedName>
</protein>
<gene>
    <name type="primary">lytN</name>
    <name type="ordered locus">SA1090</name>
</gene>
<organism>
    <name type="scientific">Staphylococcus aureus (strain N315)</name>
    <dbReference type="NCBI Taxonomy" id="158879"/>
    <lineage>
        <taxon>Bacteria</taxon>
        <taxon>Bacillati</taxon>
        <taxon>Bacillota</taxon>
        <taxon>Bacilli</taxon>
        <taxon>Bacillales</taxon>
        <taxon>Staphylococcaceae</taxon>
        <taxon>Staphylococcus</taxon>
    </lineage>
</organism>
<sequence>MFIYYCKECSIMNKQQSKVRYSIRKVSIGILSISIGMFLALGMSNKAYADEIDKSKDFTRGYEQNVFAKSELNANKNTTKDKIKNEGAVKTSDTSLKLDNKSAISNGNEINQDIKISNTPKNSSQGNNLVINNNEPTKEIKIANLEAQNSNQKKTNKVTNNYFGYYSFREAPKTQIYTVKKGDTLSAIALKYKTTVSNIQNTNNIANPNLIFIGQKLKVPMTPLVEPKPKTVSSNNKSNSNSSTLNYLKTLENRGWDFDGSYGWQCFDLVNVYWNHLYGHGLKGYGAKDIPYANNFNSEAKIYHNTPTFKAEPGDLVVFSGRFGGGYGHTAIVLNGDYDGKLMKFQSLDQNWNNGGWRKAEVAHKVVHNYENDMIFIRPFKKA</sequence>
<feature type="signal peptide" evidence="2">
    <location>
        <begin position="1"/>
        <end position="49"/>
    </location>
</feature>
<feature type="chain" id="PRO_0000227563" description="Probable cell wall hydrolase LytN">
    <location>
        <begin position="50"/>
        <end position="383"/>
    </location>
</feature>
<feature type="domain" description="LysM" evidence="4">
    <location>
        <begin position="175"/>
        <end position="219"/>
    </location>
</feature>
<feature type="domain" description="Peptidase C51" evidence="3">
    <location>
        <begin position="241"/>
        <end position="378"/>
    </location>
</feature>
<accession>Q7A5Y8</accession>
<name>LYTN_STAAN</name>
<reference key="1">
    <citation type="journal article" date="2001" name="Lancet">
        <title>Whole genome sequencing of meticillin-resistant Staphylococcus aureus.</title>
        <authorList>
            <person name="Kuroda M."/>
            <person name="Ohta T."/>
            <person name="Uchiyama I."/>
            <person name="Baba T."/>
            <person name="Yuzawa H."/>
            <person name="Kobayashi I."/>
            <person name="Cui L."/>
            <person name="Oguchi A."/>
            <person name="Aoki K."/>
            <person name="Nagai Y."/>
            <person name="Lian J.-Q."/>
            <person name="Ito T."/>
            <person name="Kanamori M."/>
            <person name="Matsumaru H."/>
            <person name="Maruyama A."/>
            <person name="Murakami H."/>
            <person name="Hosoyama A."/>
            <person name="Mizutani-Ui Y."/>
            <person name="Takahashi N.K."/>
            <person name="Sawano T."/>
            <person name="Inoue R."/>
            <person name="Kaito C."/>
            <person name="Sekimizu K."/>
            <person name="Hirakawa H."/>
            <person name="Kuhara S."/>
            <person name="Goto S."/>
            <person name="Yabuzaki J."/>
            <person name="Kanehisa M."/>
            <person name="Yamashita A."/>
            <person name="Oshima K."/>
            <person name="Furuya K."/>
            <person name="Yoshino C."/>
            <person name="Shiba T."/>
            <person name="Hattori M."/>
            <person name="Ogasawara N."/>
            <person name="Hayashi H."/>
            <person name="Hiramatsu K."/>
        </authorList>
    </citation>
    <scope>NUCLEOTIDE SEQUENCE [LARGE SCALE GENOMIC DNA]</scope>
    <source>
        <strain>N315</strain>
    </source>
</reference>
<evidence type="ECO:0000250" key="1"/>
<evidence type="ECO:0000255" key="2"/>
<evidence type="ECO:0000255" key="3">
    <source>
        <dbReference type="PROSITE-ProRule" id="PRU00048"/>
    </source>
</evidence>
<evidence type="ECO:0000255" key="4">
    <source>
        <dbReference type="PROSITE-ProRule" id="PRU01118"/>
    </source>
</evidence>
<evidence type="ECO:0000305" key="5"/>
<dbReference type="EC" id="3.-.-.-"/>
<dbReference type="EMBL" id="BA000018">
    <property type="protein sequence ID" value="BAB42342.1"/>
    <property type="status" value="ALT_INIT"/>
    <property type="molecule type" value="Genomic_DNA"/>
</dbReference>
<dbReference type="PIR" id="B89898">
    <property type="entry name" value="B89898"/>
</dbReference>
<dbReference type="SMR" id="Q7A5Y8"/>
<dbReference type="CAZy" id="CBM50">
    <property type="family name" value="Carbohydrate-Binding Module Family 50"/>
</dbReference>
<dbReference type="EnsemblBacteria" id="BAB42342">
    <property type="protein sequence ID" value="BAB42342"/>
    <property type="gene ID" value="BAB42342"/>
</dbReference>
<dbReference type="KEGG" id="sau:SA1090"/>
<dbReference type="HOGENOM" id="CLU_060961_0_0_9"/>
<dbReference type="GO" id="GO:0005576">
    <property type="term" value="C:extracellular region"/>
    <property type="evidence" value="ECO:0007669"/>
    <property type="project" value="UniProtKB-SubCell"/>
</dbReference>
<dbReference type="GO" id="GO:0016787">
    <property type="term" value="F:hydrolase activity"/>
    <property type="evidence" value="ECO:0007669"/>
    <property type="project" value="UniProtKB-KW"/>
</dbReference>
<dbReference type="GO" id="GO:0008932">
    <property type="term" value="F:lytic endotransglycosylase activity"/>
    <property type="evidence" value="ECO:0007669"/>
    <property type="project" value="TreeGrafter"/>
</dbReference>
<dbReference type="GO" id="GO:0071555">
    <property type="term" value="P:cell wall organization"/>
    <property type="evidence" value="ECO:0007669"/>
    <property type="project" value="UniProtKB-KW"/>
</dbReference>
<dbReference type="CDD" id="cd00118">
    <property type="entry name" value="LysM"/>
    <property type="match status" value="1"/>
</dbReference>
<dbReference type="FunFam" id="3.10.350.10:FF:000021">
    <property type="entry name" value="Probable cell wall hydrolase LytN"/>
    <property type="match status" value="1"/>
</dbReference>
<dbReference type="FunFam" id="3.90.1720.10:FF:000015">
    <property type="entry name" value="Probable cell wall hydrolase LytN"/>
    <property type="match status" value="1"/>
</dbReference>
<dbReference type="Gene3D" id="3.90.1720.10">
    <property type="entry name" value="endopeptidase domain like (from Nostoc punctiforme)"/>
    <property type="match status" value="1"/>
</dbReference>
<dbReference type="Gene3D" id="3.10.350.10">
    <property type="entry name" value="LysM domain"/>
    <property type="match status" value="1"/>
</dbReference>
<dbReference type="InterPro" id="IPR007921">
    <property type="entry name" value="CHAP_dom"/>
</dbReference>
<dbReference type="InterPro" id="IPR018392">
    <property type="entry name" value="LysM_dom"/>
</dbReference>
<dbReference type="InterPro" id="IPR036779">
    <property type="entry name" value="LysM_dom_sf"/>
</dbReference>
<dbReference type="InterPro" id="IPR038765">
    <property type="entry name" value="Papain-like_cys_pep_sf"/>
</dbReference>
<dbReference type="InterPro" id="IPR005877">
    <property type="entry name" value="YSIRK_signal_dom"/>
</dbReference>
<dbReference type="NCBIfam" id="TIGR01168">
    <property type="entry name" value="YSIRK_signal"/>
    <property type="match status" value="1"/>
</dbReference>
<dbReference type="PANTHER" id="PTHR33734">
    <property type="entry name" value="LYSM DOMAIN-CONTAINING GPI-ANCHORED PROTEIN 2"/>
    <property type="match status" value="1"/>
</dbReference>
<dbReference type="PANTHER" id="PTHR33734:SF22">
    <property type="entry name" value="MEMBRANE-BOUND LYTIC MUREIN TRANSGLYCOSYLASE D"/>
    <property type="match status" value="1"/>
</dbReference>
<dbReference type="Pfam" id="PF05257">
    <property type="entry name" value="CHAP"/>
    <property type="match status" value="1"/>
</dbReference>
<dbReference type="Pfam" id="PF01476">
    <property type="entry name" value="LysM"/>
    <property type="match status" value="1"/>
</dbReference>
<dbReference type="SMART" id="SM00257">
    <property type="entry name" value="LysM"/>
    <property type="match status" value="1"/>
</dbReference>
<dbReference type="SUPFAM" id="SSF54001">
    <property type="entry name" value="Cysteine proteinases"/>
    <property type="match status" value="1"/>
</dbReference>
<dbReference type="SUPFAM" id="SSF54106">
    <property type="entry name" value="LysM domain"/>
    <property type="match status" value="1"/>
</dbReference>
<dbReference type="PROSITE" id="PS50911">
    <property type="entry name" value="CHAP"/>
    <property type="match status" value="1"/>
</dbReference>
<dbReference type="PROSITE" id="PS51782">
    <property type="entry name" value="LYSM"/>
    <property type="match status" value="1"/>
</dbReference>